<keyword id="KW-0012">Acyltransferase</keyword>
<keyword id="KW-1185">Reference proteome</keyword>
<keyword id="KW-0808">Transferase</keyword>
<gene>
    <name evidence="6" type="primary">FDB2</name>
    <name type="ORF">FPSE_08123</name>
</gene>
<evidence type="ECO:0000250" key="1">
    <source>
        <dbReference type="UniProtKB" id="P9WJI5"/>
    </source>
</evidence>
<evidence type="ECO:0000250" key="2">
    <source>
        <dbReference type="UniProtKB" id="W7MLD5"/>
    </source>
</evidence>
<evidence type="ECO:0000269" key="3">
    <source>
    </source>
</evidence>
<evidence type="ECO:0000269" key="4">
    <source>
    </source>
</evidence>
<evidence type="ECO:0000269" key="5">
    <source>
    </source>
</evidence>
<evidence type="ECO:0000303" key="6">
    <source>
    </source>
</evidence>
<evidence type="ECO:0000305" key="7"/>
<evidence type="ECO:0000305" key="8">
    <source>
    </source>
</evidence>
<comment type="function">
    <text evidence="2 3 4 5 8">N-malonyltransferase; part of the Fusarium detoxification of benzoxazolinone cluster involved in the degradation of benzoxazolinones produced by the host plant (PubMed:25727347, PubMed:26296598, PubMed:26828593). Maize, wheat, and rye produce the 2 benzoxazinone phytoanticipins 2,4-dihy-droxy-7-methoxy-1,4-benzoxazin-3-one (DIMBOA) and 2,4-dihydroxy-1,4-benzoxazin-3-one (DIBOA) that, due to their inherent instability once released, spontaneously degrade to the more stable corresponding benzoxazolinones, 6-methoxy-2-benzoxazolinone (MBOA) and 2-benzoxazolinone (BOA), respectively (By similarity). The first step in the detoxification of benzoxazolinones involves the hydrolysis of the cyclic ester bond of benzoxazolinones by the gamma-lactamase FDB1 to aminophenols (PubMed:26296598). FDB1 is able to convert BOA into 2-aminophenol (2-AP), as well as MBOA into 5-methoxy-2-aminophenol (2-AMP) (PubMed:25727347, PubMed:26296598). The N-malonyltransferase FDB2 then metabolizes aminophenols via N-malonylation to non-toxic malonamic acids (PubMed:26296598). FDB2 converts 2-AP into N-(2-hydroxyphenyl) malonamic acid (HPMA) and 2-AMP into N-(2-hydroxy-4-methoxyphenyl) malonamic acid (HMPMA) (PubMed:26296598). The cluster also contains 2 transcription factors (FDB3 and FPSE_08121), an aldo-keto reductase (FPSE_08125) that possibly associates with a ketone component of BOA and MBOA degradation, an esterase (FPSE_08126), an acyl-CoA transferase (FPSE_08120), a solute carrier protein (FPSE_08119) and a transmembrane transporter (FPSE_08127) proposed to shuttle metabolites of benzoxazolinone degradation (Probable).</text>
</comment>
<comment type="pathway">
    <text evidence="3">Xenobiotic degradation.</text>
</comment>
<comment type="induction">
    <text evidence="3 5">Expression is induced in response to 2-benzoxasolinone (BOA) exposure (PubMed:25727347). Expression is also induced in response to 6-methoxy-2-benzoxazolinone (MBOA) and 2-aminophenol (2-AP) treatment (PubMed:26828593).</text>
</comment>
<comment type="disruption phenotype">
    <text evidence="3">Significantly reduced growth on medium amended with BOA or 6-methoxy-2-benzoxazolinone (MBOA) and no growth on 2-aminophenol (2-AP) (PubMed:25727347). Leads to the accumulation of 2-amino-3H-phenoxazin-3-one (2-APO), a compound resulting from spontaneous oxidation of 2-AP, when grown on BOA-amended medium (PubMed:25727347). Results also in reduced virulence (PubMed:25727347).</text>
</comment>
<comment type="similarity">
    <text evidence="7">Belongs to the arylamine N-acetyltransferase family.</text>
</comment>
<name>FDB2_FUSPC</name>
<organism>
    <name type="scientific">Fusarium pseudograminearum (strain CS3096)</name>
    <name type="common">Wheat and barley crown-rot fungus</name>
    <dbReference type="NCBI Taxonomy" id="1028729"/>
    <lineage>
        <taxon>Eukaryota</taxon>
        <taxon>Fungi</taxon>
        <taxon>Dikarya</taxon>
        <taxon>Ascomycota</taxon>
        <taxon>Pezizomycotina</taxon>
        <taxon>Sordariomycetes</taxon>
        <taxon>Hypocreomycetidae</taxon>
        <taxon>Hypocreales</taxon>
        <taxon>Nectriaceae</taxon>
        <taxon>Fusarium</taxon>
    </lineage>
</organism>
<dbReference type="EC" id="2.3.1.-" evidence="3"/>
<dbReference type="EMBL" id="AFNW01000283">
    <property type="protein sequence ID" value="EKJ71677.1"/>
    <property type="molecule type" value="Genomic_DNA"/>
</dbReference>
<dbReference type="RefSeq" id="XP_009259516.1">
    <property type="nucleotide sequence ID" value="XM_009261241.1"/>
</dbReference>
<dbReference type="SMR" id="K3VCL0"/>
<dbReference type="EnsemblFungi" id="EKJ71677">
    <property type="protein sequence ID" value="EKJ71677"/>
    <property type="gene ID" value="FPSE_08123"/>
</dbReference>
<dbReference type="GeneID" id="20366741"/>
<dbReference type="KEGG" id="fpu:FPSE_08123"/>
<dbReference type="eggNOG" id="ENOG502RD0D">
    <property type="taxonomic scope" value="Eukaryota"/>
</dbReference>
<dbReference type="HOGENOM" id="CLU_049918_2_0_1"/>
<dbReference type="OrthoDB" id="10260017at2759"/>
<dbReference type="PHI-base" id="PHI:4601"/>
<dbReference type="Proteomes" id="UP000007978">
    <property type="component" value="Chromosome 2"/>
</dbReference>
<dbReference type="GO" id="GO:0004060">
    <property type="term" value="F:arylamine N-acetyltransferase activity"/>
    <property type="evidence" value="ECO:0007669"/>
    <property type="project" value="UniProtKB-EC"/>
</dbReference>
<dbReference type="Gene3D" id="3.30.2140.20">
    <property type="match status" value="1"/>
</dbReference>
<dbReference type="InterPro" id="IPR001447">
    <property type="entry name" value="Arylamine_N-AcTrfase"/>
</dbReference>
<dbReference type="InterPro" id="IPR053710">
    <property type="entry name" value="Arylamine_NAT_domain_sf"/>
</dbReference>
<dbReference type="InterPro" id="IPR038765">
    <property type="entry name" value="Papain-like_cys_pep_sf"/>
</dbReference>
<dbReference type="PANTHER" id="PTHR11786:SF0">
    <property type="entry name" value="ARYLAMINE N-ACETYLTRANSFERASE 4-RELATED"/>
    <property type="match status" value="1"/>
</dbReference>
<dbReference type="PANTHER" id="PTHR11786">
    <property type="entry name" value="N-HYDROXYARYLAMINE O-ACETYLTRANSFERASE"/>
    <property type="match status" value="1"/>
</dbReference>
<dbReference type="Pfam" id="PF00797">
    <property type="entry name" value="Acetyltransf_2"/>
    <property type="match status" value="1"/>
</dbReference>
<dbReference type="SUPFAM" id="SSF54001">
    <property type="entry name" value="Cysteine proteinases"/>
    <property type="match status" value="1"/>
</dbReference>
<protein>
    <recommendedName>
        <fullName evidence="6">N-malonyltransferase FDB2</fullName>
        <ecNumber evidence="3">2.3.1.-</ecNumber>
    </recommendedName>
    <alternativeName>
        <fullName evidence="6">Fusarium detoxification of benzoxazolinone cluster protein 2</fullName>
        <shortName evidence="6">FDB cluster protein 2</shortName>
    </alternativeName>
</protein>
<proteinExistence type="evidence at transcript level"/>
<reference key="1">
    <citation type="journal article" date="2012" name="PLoS Pathog.">
        <title>Comparative pathogenomics reveals horizontally acquired novel virulence genes in fungi infecting cereal hosts.</title>
        <authorList>
            <person name="Gardiner D.M."/>
            <person name="McDonald M.C."/>
            <person name="Covarelli L."/>
            <person name="Solomon P.S."/>
            <person name="Rusu A.G."/>
            <person name="Marshall M."/>
            <person name="Kazan K."/>
            <person name="Chakraborty S."/>
            <person name="McDonald B.A."/>
            <person name="Manners J.M."/>
        </authorList>
    </citation>
    <scope>NUCLEOTIDE SEQUENCE [LARGE SCALE GENOMIC DNA]</scope>
    <source>
        <strain>CS3096</strain>
    </source>
</reference>
<reference key="2">
    <citation type="journal article" date="2015" name="Fungal Genet. Biol.">
        <title>A gamma-lactamase from cereal infecting Fusarium spp. catalyses the first step in the degradation of the benzoxazolinone class of phytoalexins.</title>
        <authorList>
            <person name="Kettle A.J."/>
            <person name="Carere J."/>
            <person name="Batley J."/>
            <person name="Benfield A.H."/>
            <person name="Manners J.M."/>
            <person name="Kazan K."/>
            <person name="Gardiner D.M."/>
        </authorList>
    </citation>
    <scope>FUNCTION</scope>
</reference>
<reference key="3">
    <citation type="journal article" date="2015" name="Mol. Plant Pathol.">
        <title>Degradation of the benzoxazolinone class of phytoalexins is important for virulence of Fusarium pseudograminearum towards wheat.</title>
        <authorList>
            <person name="Kettle A.J."/>
            <person name="Batley J."/>
            <person name="Benfield A.H."/>
            <person name="Manners J.M."/>
            <person name="Kazan K."/>
            <person name="Gardiner D.M."/>
        </authorList>
    </citation>
    <scope>FUNCTION</scope>
    <scope>INDUCTION</scope>
    <scope>DISRUPTION PHENOTYPE</scope>
    <scope>PATHWAY</scope>
</reference>
<reference key="4">
    <citation type="journal article" date="2016" name="Fungal Genet. Biol.">
        <title>The Fdb3 transcription factor of the Fusarium Detoxification of Benzoxazolinone gene cluster is required for MBOA but not BOA degradation in Fusarium pseudograminearum.</title>
        <authorList>
            <person name="Kettle A.J."/>
            <person name="Carere J."/>
            <person name="Batley J."/>
            <person name="Manners J.M."/>
            <person name="Kazan K."/>
            <person name="Gardiner D.M."/>
        </authorList>
    </citation>
    <scope>FUNCTION</scope>
    <scope>INDUCTION</scope>
</reference>
<sequence length="343" mass="39832">MSCLPEPTVLTQLWVDNPPRYSQAQLQDYLKVIKLPQRFLNSAVLKDSSLAHTKEHGLPLLKAITRYHACNVPFENLELHYSAHKTITLDPVELFEKIVTRRRGGRCMENNTFLGTVFRSFGYEVRDCGGRVARAMSPYPDVRKNQAYTYDGWNHMLNLVYLEDEWYVVDVGMGSMGPNLPFPLRHGFETMSIAPRKIRLQRRPIAESHASNPTKGTELWCYDVCLKPTKDGTEVWIPTYAFTETEFLPQDYEVMSWFTSTNPRSFFTRYVTCTKMIQDEEKEEIIGNLTLFKDTIRETIGNQRKVVRECKTEEERIQALVEIFDVNLTDEEKNGLPEERRLA</sequence>
<feature type="chain" id="PRO_0000454594" description="N-malonyltransferase FDB2">
    <location>
        <begin position="1"/>
        <end position="343"/>
    </location>
</feature>
<feature type="active site" description="Acyl-thioester intermediate" evidence="1">
    <location>
        <position position="107"/>
    </location>
</feature>
<feature type="active site" description="Proton acceptor" evidence="1">
    <location>
        <position position="155"/>
    </location>
</feature>
<feature type="active site" evidence="1">
    <location>
        <position position="170"/>
    </location>
</feature>
<accession>K3VCL0</accession>